<accession>Q3A6M3</accession>
<sequence>MARIAGIDLPRNKRIEVALTYIYGIGRSSSQDILQKAGVDPNTRTDELTEAEAGQIRDIIDGQMQVEGDLRRVVTGNIKRLMDLGCYRGLRHRRGLPVRGQKTKTNARTRKGPRKTVAGKRK</sequence>
<comment type="function">
    <text evidence="1">Located at the top of the head of the 30S subunit, it contacts several helices of the 16S rRNA. In the 70S ribosome it contacts the 23S rRNA (bridge B1a) and protein L5 of the 50S subunit (bridge B1b), connecting the 2 subunits; these bridges are implicated in subunit movement. Contacts the tRNAs in the A and P-sites.</text>
</comment>
<comment type="subunit">
    <text evidence="1">Part of the 30S ribosomal subunit. Forms a loose heterodimer with protein S19. Forms two bridges to the 50S subunit in the 70S ribosome.</text>
</comment>
<comment type="similarity">
    <text evidence="1">Belongs to the universal ribosomal protein uS13 family.</text>
</comment>
<dbReference type="EMBL" id="CP000142">
    <property type="protein sequence ID" value="ABA87984.1"/>
    <property type="molecule type" value="Genomic_DNA"/>
</dbReference>
<dbReference type="RefSeq" id="WP_011340427.1">
    <property type="nucleotide sequence ID" value="NC_007498.2"/>
</dbReference>
<dbReference type="SMR" id="Q3A6M3"/>
<dbReference type="STRING" id="338963.Pcar_0725"/>
<dbReference type="KEGG" id="pca:Pcar_0725"/>
<dbReference type="eggNOG" id="COG0099">
    <property type="taxonomic scope" value="Bacteria"/>
</dbReference>
<dbReference type="HOGENOM" id="CLU_103849_1_2_7"/>
<dbReference type="OrthoDB" id="9803610at2"/>
<dbReference type="Proteomes" id="UP000002534">
    <property type="component" value="Chromosome"/>
</dbReference>
<dbReference type="GO" id="GO:0005829">
    <property type="term" value="C:cytosol"/>
    <property type="evidence" value="ECO:0007669"/>
    <property type="project" value="TreeGrafter"/>
</dbReference>
<dbReference type="GO" id="GO:0015935">
    <property type="term" value="C:small ribosomal subunit"/>
    <property type="evidence" value="ECO:0007669"/>
    <property type="project" value="TreeGrafter"/>
</dbReference>
<dbReference type="GO" id="GO:0019843">
    <property type="term" value="F:rRNA binding"/>
    <property type="evidence" value="ECO:0007669"/>
    <property type="project" value="UniProtKB-UniRule"/>
</dbReference>
<dbReference type="GO" id="GO:0003735">
    <property type="term" value="F:structural constituent of ribosome"/>
    <property type="evidence" value="ECO:0007669"/>
    <property type="project" value="InterPro"/>
</dbReference>
<dbReference type="GO" id="GO:0000049">
    <property type="term" value="F:tRNA binding"/>
    <property type="evidence" value="ECO:0007669"/>
    <property type="project" value="UniProtKB-UniRule"/>
</dbReference>
<dbReference type="GO" id="GO:0006412">
    <property type="term" value="P:translation"/>
    <property type="evidence" value="ECO:0007669"/>
    <property type="project" value="UniProtKB-UniRule"/>
</dbReference>
<dbReference type="FunFam" id="1.10.8.50:FF:000001">
    <property type="entry name" value="30S ribosomal protein S13"/>
    <property type="match status" value="1"/>
</dbReference>
<dbReference type="FunFam" id="4.10.910.10:FF:000001">
    <property type="entry name" value="30S ribosomal protein S13"/>
    <property type="match status" value="1"/>
</dbReference>
<dbReference type="Gene3D" id="1.10.8.50">
    <property type="match status" value="1"/>
</dbReference>
<dbReference type="Gene3D" id="4.10.910.10">
    <property type="entry name" value="30s ribosomal protein s13, domain 2"/>
    <property type="match status" value="1"/>
</dbReference>
<dbReference type="HAMAP" id="MF_01315">
    <property type="entry name" value="Ribosomal_uS13"/>
    <property type="match status" value="1"/>
</dbReference>
<dbReference type="InterPro" id="IPR027437">
    <property type="entry name" value="Rbsml_uS13_C"/>
</dbReference>
<dbReference type="InterPro" id="IPR001892">
    <property type="entry name" value="Ribosomal_uS13"/>
</dbReference>
<dbReference type="InterPro" id="IPR010979">
    <property type="entry name" value="Ribosomal_uS13-like_H2TH"/>
</dbReference>
<dbReference type="InterPro" id="IPR019980">
    <property type="entry name" value="Ribosomal_uS13_bac-type"/>
</dbReference>
<dbReference type="InterPro" id="IPR018269">
    <property type="entry name" value="Ribosomal_uS13_CS"/>
</dbReference>
<dbReference type="NCBIfam" id="TIGR03631">
    <property type="entry name" value="uS13_bact"/>
    <property type="match status" value="1"/>
</dbReference>
<dbReference type="PANTHER" id="PTHR10871">
    <property type="entry name" value="30S RIBOSOMAL PROTEIN S13/40S RIBOSOMAL PROTEIN S18"/>
    <property type="match status" value="1"/>
</dbReference>
<dbReference type="PANTHER" id="PTHR10871:SF1">
    <property type="entry name" value="SMALL RIBOSOMAL SUBUNIT PROTEIN US13M"/>
    <property type="match status" value="1"/>
</dbReference>
<dbReference type="Pfam" id="PF00416">
    <property type="entry name" value="Ribosomal_S13"/>
    <property type="match status" value="1"/>
</dbReference>
<dbReference type="PIRSF" id="PIRSF002134">
    <property type="entry name" value="Ribosomal_S13"/>
    <property type="match status" value="1"/>
</dbReference>
<dbReference type="SUPFAM" id="SSF46946">
    <property type="entry name" value="S13-like H2TH domain"/>
    <property type="match status" value="1"/>
</dbReference>
<dbReference type="PROSITE" id="PS00646">
    <property type="entry name" value="RIBOSOMAL_S13_1"/>
    <property type="match status" value="1"/>
</dbReference>
<dbReference type="PROSITE" id="PS50159">
    <property type="entry name" value="RIBOSOMAL_S13_2"/>
    <property type="match status" value="1"/>
</dbReference>
<keyword id="KW-1185">Reference proteome</keyword>
<keyword id="KW-0687">Ribonucleoprotein</keyword>
<keyword id="KW-0689">Ribosomal protein</keyword>
<keyword id="KW-0694">RNA-binding</keyword>
<keyword id="KW-0699">rRNA-binding</keyword>
<keyword id="KW-0820">tRNA-binding</keyword>
<evidence type="ECO:0000255" key="1">
    <source>
        <dbReference type="HAMAP-Rule" id="MF_01315"/>
    </source>
</evidence>
<evidence type="ECO:0000256" key="2">
    <source>
        <dbReference type="SAM" id="MobiDB-lite"/>
    </source>
</evidence>
<evidence type="ECO:0000305" key="3"/>
<organism>
    <name type="scientific">Syntrophotalea carbinolica (strain DSM 2380 / NBRC 103641 / GraBd1)</name>
    <name type="common">Pelobacter carbinolicus</name>
    <dbReference type="NCBI Taxonomy" id="338963"/>
    <lineage>
        <taxon>Bacteria</taxon>
        <taxon>Pseudomonadati</taxon>
        <taxon>Thermodesulfobacteriota</taxon>
        <taxon>Desulfuromonadia</taxon>
        <taxon>Desulfuromonadales</taxon>
        <taxon>Syntrophotaleaceae</taxon>
        <taxon>Syntrophotalea</taxon>
    </lineage>
</organism>
<proteinExistence type="inferred from homology"/>
<reference key="1">
    <citation type="submission" date="2005-10" db="EMBL/GenBank/DDBJ databases">
        <title>Complete sequence of Pelobacter carbinolicus DSM 2380.</title>
        <authorList>
            <person name="Copeland A."/>
            <person name="Lucas S."/>
            <person name="Lapidus A."/>
            <person name="Barry K."/>
            <person name="Detter J.C."/>
            <person name="Glavina T."/>
            <person name="Hammon N."/>
            <person name="Israni S."/>
            <person name="Pitluck S."/>
            <person name="Chertkov O."/>
            <person name="Schmutz J."/>
            <person name="Larimer F."/>
            <person name="Land M."/>
            <person name="Kyrpides N."/>
            <person name="Ivanova N."/>
            <person name="Richardson P."/>
        </authorList>
    </citation>
    <scope>NUCLEOTIDE SEQUENCE [LARGE SCALE GENOMIC DNA]</scope>
    <source>
        <strain>DSM 2380 / NBRC 103641 / GraBd1</strain>
    </source>
</reference>
<name>RS13_SYNC1</name>
<protein>
    <recommendedName>
        <fullName evidence="1">Small ribosomal subunit protein uS13</fullName>
    </recommendedName>
    <alternativeName>
        <fullName evidence="3">30S ribosomal protein S13</fullName>
    </alternativeName>
</protein>
<gene>
    <name evidence="1" type="primary">rpsM</name>
    <name type="ordered locus">Pcar_0725</name>
</gene>
<feature type="chain" id="PRO_0000230539" description="Small ribosomal subunit protein uS13">
    <location>
        <begin position="1"/>
        <end position="122"/>
    </location>
</feature>
<feature type="region of interest" description="Disordered" evidence="2">
    <location>
        <begin position="94"/>
        <end position="122"/>
    </location>
</feature>